<accession>A4QJE3</accession>
<sequence length="43" mass="4722">METATLVAIFISGLLVSFTGYALYTAFGQPSQQLRDPFEEHGD</sequence>
<dbReference type="EMBL" id="AP009366">
    <property type="protein sequence ID" value="BAF49798.1"/>
    <property type="molecule type" value="Genomic_DNA"/>
</dbReference>
<dbReference type="RefSeq" id="YP_001122974.1">
    <property type="nucleotide sequence ID" value="NC_009265.1"/>
</dbReference>
<dbReference type="SMR" id="A4QJE3"/>
<dbReference type="GeneID" id="4968658"/>
<dbReference type="GO" id="GO:0009535">
    <property type="term" value="C:chloroplast thylakoid membrane"/>
    <property type="evidence" value="ECO:0007669"/>
    <property type="project" value="UniProtKB-SubCell"/>
</dbReference>
<dbReference type="GO" id="GO:0015979">
    <property type="term" value="P:photosynthesis"/>
    <property type="evidence" value="ECO:0007669"/>
    <property type="project" value="InterPro"/>
</dbReference>
<dbReference type="HAMAP" id="MF_00293">
    <property type="entry name" value="PSII_PsbN"/>
    <property type="match status" value="1"/>
</dbReference>
<dbReference type="InterPro" id="IPR003398">
    <property type="entry name" value="PSII_PsbN"/>
</dbReference>
<dbReference type="PANTHER" id="PTHR35326">
    <property type="entry name" value="PROTEIN PSBN"/>
    <property type="match status" value="1"/>
</dbReference>
<dbReference type="PANTHER" id="PTHR35326:SF3">
    <property type="entry name" value="PROTEIN PSBN"/>
    <property type="match status" value="1"/>
</dbReference>
<dbReference type="Pfam" id="PF02468">
    <property type="entry name" value="PsbN"/>
    <property type="match status" value="1"/>
</dbReference>
<proteinExistence type="inferred from homology"/>
<reference key="1">
    <citation type="submission" date="2007-03" db="EMBL/GenBank/DDBJ databases">
        <title>Sequencing analysis of Aethionema coridifolium chloroplast DNA.</title>
        <authorList>
            <person name="Hosouchi T."/>
            <person name="Tsuruoka H."/>
            <person name="Kotani H."/>
        </authorList>
    </citation>
    <scope>NUCLEOTIDE SEQUENCE [LARGE SCALE GENOMIC DNA]</scope>
</reference>
<protein>
    <recommendedName>
        <fullName evidence="1">Protein PsbN</fullName>
    </recommendedName>
</protein>
<evidence type="ECO:0000255" key="1">
    <source>
        <dbReference type="HAMAP-Rule" id="MF_00293"/>
    </source>
</evidence>
<comment type="function">
    <text evidence="1">May play a role in photosystem I and II biogenesis.</text>
</comment>
<comment type="subcellular location">
    <subcellularLocation>
        <location evidence="1">Plastid</location>
        <location evidence="1">Chloroplast thylakoid membrane</location>
        <topology evidence="1">Single-pass membrane protein</topology>
    </subcellularLocation>
</comment>
<comment type="similarity">
    <text evidence="1">Belongs to the PsbN family.</text>
</comment>
<comment type="caution">
    <text evidence="1">Originally thought to be a component of PSII; based on experiments in Synechocystis, N.tabacum and barley, and its absence from PSII in T.elongatus and T.vulcanus, this is probably not true.</text>
</comment>
<keyword id="KW-0150">Chloroplast</keyword>
<keyword id="KW-0472">Membrane</keyword>
<keyword id="KW-0934">Plastid</keyword>
<keyword id="KW-0793">Thylakoid</keyword>
<keyword id="KW-0812">Transmembrane</keyword>
<keyword id="KW-1133">Transmembrane helix</keyword>
<feature type="chain" id="PRO_0000362172" description="Protein PsbN">
    <location>
        <begin position="1"/>
        <end position="43"/>
    </location>
</feature>
<feature type="transmembrane region" description="Helical" evidence="1">
    <location>
        <begin position="7"/>
        <end position="27"/>
    </location>
</feature>
<gene>
    <name evidence="1" type="primary">psbN</name>
</gene>
<organism>
    <name type="scientific">Aethionema cordifolium</name>
    <name type="common">Lebanon stonecress</name>
    <dbReference type="NCBI Taxonomy" id="434059"/>
    <lineage>
        <taxon>Eukaryota</taxon>
        <taxon>Viridiplantae</taxon>
        <taxon>Streptophyta</taxon>
        <taxon>Embryophyta</taxon>
        <taxon>Tracheophyta</taxon>
        <taxon>Spermatophyta</taxon>
        <taxon>Magnoliopsida</taxon>
        <taxon>eudicotyledons</taxon>
        <taxon>Gunneridae</taxon>
        <taxon>Pentapetalae</taxon>
        <taxon>rosids</taxon>
        <taxon>malvids</taxon>
        <taxon>Brassicales</taxon>
        <taxon>Brassicaceae</taxon>
        <taxon>Aethionemeae</taxon>
        <taxon>Aethionema</taxon>
    </lineage>
</organism>
<geneLocation type="chloroplast"/>
<name>PSBN_AETCO</name>